<dbReference type="EMBL" id="CP001096">
    <property type="protein sequence ID" value="ACF02171.1"/>
    <property type="molecule type" value="Genomic_DNA"/>
</dbReference>
<dbReference type="RefSeq" id="WP_011158798.1">
    <property type="nucleotide sequence ID" value="NC_011004.1"/>
</dbReference>
<dbReference type="SMR" id="B3QBY4"/>
<dbReference type="GeneID" id="66894340"/>
<dbReference type="KEGG" id="rpt:Rpal_3671"/>
<dbReference type="HOGENOM" id="CLU_072226_1_1_5"/>
<dbReference type="OrthoDB" id="9807653at2"/>
<dbReference type="Proteomes" id="UP000001725">
    <property type="component" value="Chromosome"/>
</dbReference>
<dbReference type="GO" id="GO:0015935">
    <property type="term" value="C:small ribosomal subunit"/>
    <property type="evidence" value="ECO:0007669"/>
    <property type="project" value="InterPro"/>
</dbReference>
<dbReference type="GO" id="GO:0019843">
    <property type="term" value="F:rRNA binding"/>
    <property type="evidence" value="ECO:0007669"/>
    <property type="project" value="UniProtKB-UniRule"/>
</dbReference>
<dbReference type="GO" id="GO:0003735">
    <property type="term" value="F:structural constituent of ribosome"/>
    <property type="evidence" value="ECO:0007669"/>
    <property type="project" value="InterPro"/>
</dbReference>
<dbReference type="GO" id="GO:0000049">
    <property type="term" value="F:tRNA binding"/>
    <property type="evidence" value="ECO:0007669"/>
    <property type="project" value="UniProtKB-UniRule"/>
</dbReference>
<dbReference type="GO" id="GO:0006412">
    <property type="term" value="P:translation"/>
    <property type="evidence" value="ECO:0007669"/>
    <property type="project" value="UniProtKB-UniRule"/>
</dbReference>
<dbReference type="CDD" id="cd14869">
    <property type="entry name" value="uS7_Bacteria"/>
    <property type="match status" value="1"/>
</dbReference>
<dbReference type="FunFam" id="1.10.455.10:FF:000001">
    <property type="entry name" value="30S ribosomal protein S7"/>
    <property type="match status" value="1"/>
</dbReference>
<dbReference type="Gene3D" id="1.10.455.10">
    <property type="entry name" value="Ribosomal protein S7 domain"/>
    <property type="match status" value="1"/>
</dbReference>
<dbReference type="HAMAP" id="MF_00480_B">
    <property type="entry name" value="Ribosomal_uS7_B"/>
    <property type="match status" value="1"/>
</dbReference>
<dbReference type="InterPro" id="IPR000235">
    <property type="entry name" value="Ribosomal_uS7"/>
</dbReference>
<dbReference type="InterPro" id="IPR005717">
    <property type="entry name" value="Ribosomal_uS7_bac/org-type"/>
</dbReference>
<dbReference type="InterPro" id="IPR020606">
    <property type="entry name" value="Ribosomal_uS7_CS"/>
</dbReference>
<dbReference type="InterPro" id="IPR023798">
    <property type="entry name" value="Ribosomal_uS7_dom"/>
</dbReference>
<dbReference type="InterPro" id="IPR036823">
    <property type="entry name" value="Ribosomal_uS7_dom_sf"/>
</dbReference>
<dbReference type="NCBIfam" id="TIGR01029">
    <property type="entry name" value="rpsG_bact"/>
    <property type="match status" value="1"/>
</dbReference>
<dbReference type="PANTHER" id="PTHR11205">
    <property type="entry name" value="RIBOSOMAL PROTEIN S7"/>
    <property type="match status" value="1"/>
</dbReference>
<dbReference type="Pfam" id="PF00177">
    <property type="entry name" value="Ribosomal_S7"/>
    <property type="match status" value="1"/>
</dbReference>
<dbReference type="PIRSF" id="PIRSF002122">
    <property type="entry name" value="RPS7p_RPS7a_RPS5e_RPS7o"/>
    <property type="match status" value="1"/>
</dbReference>
<dbReference type="SUPFAM" id="SSF47973">
    <property type="entry name" value="Ribosomal protein S7"/>
    <property type="match status" value="1"/>
</dbReference>
<dbReference type="PROSITE" id="PS00052">
    <property type="entry name" value="RIBOSOMAL_S7"/>
    <property type="match status" value="1"/>
</dbReference>
<protein>
    <recommendedName>
        <fullName evidence="1">Small ribosomal subunit protein uS7</fullName>
    </recommendedName>
    <alternativeName>
        <fullName evidence="2">30S ribosomal protein S7</fullName>
    </alternativeName>
</protein>
<gene>
    <name evidence="1" type="primary">rpsG</name>
    <name type="ordered locus">Rpal_3671</name>
</gene>
<comment type="function">
    <text evidence="1">One of the primary rRNA binding proteins, it binds directly to 16S rRNA where it nucleates assembly of the head domain of the 30S subunit. Is located at the subunit interface close to the decoding center, probably blocks exit of the E-site tRNA.</text>
</comment>
<comment type="subunit">
    <text evidence="1">Part of the 30S ribosomal subunit. Contacts proteins S9 and S11.</text>
</comment>
<comment type="similarity">
    <text evidence="1">Belongs to the universal ribosomal protein uS7 family.</text>
</comment>
<evidence type="ECO:0000255" key="1">
    <source>
        <dbReference type="HAMAP-Rule" id="MF_00480"/>
    </source>
</evidence>
<evidence type="ECO:0000305" key="2"/>
<accession>B3QBY4</accession>
<feature type="chain" id="PRO_1000125992" description="Small ribosomal subunit protein uS7">
    <location>
        <begin position="1"/>
        <end position="156"/>
    </location>
</feature>
<organism>
    <name type="scientific">Rhodopseudomonas palustris (strain TIE-1)</name>
    <dbReference type="NCBI Taxonomy" id="395960"/>
    <lineage>
        <taxon>Bacteria</taxon>
        <taxon>Pseudomonadati</taxon>
        <taxon>Pseudomonadota</taxon>
        <taxon>Alphaproteobacteria</taxon>
        <taxon>Hyphomicrobiales</taxon>
        <taxon>Nitrobacteraceae</taxon>
        <taxon>Rhodopseudomonas</taxon>
    </lineage>
</organism>
<keyword id="KW-0687">Ribonucleoprotein</keyword>
<keyword id="KW-0689">Ribosomal protein</keyword>
<keyword id="KW-0694">RNA-binding</keyword>
<keyword id="KW-0699">rRNA-binding</keyword>
<keyword id="KW-0820">tRNA-binding</keyword>
<sequence length="156" mass="17688">MSRRHAAEKREVLPDPKFGNIIVTKFMNSVMYAGKKSVAESIVYGAFDLIEAKTKQPPLGVFEQALDNVMPTIEVRSRRVGGATYQVPVEVRSTRRQALGIRWLITAARGRNEKTMTERLSAELLDASNNRGNAVKKREDVHKMAEANRAFSHYRW</sequence>
<reference key="1">
    <citation type="submission" date="2008-05" db="EMBL/GenBank/DDBJ databases">
        <title>Complete sequence of Rhodopseudomonas palustris TIE-1.</title>
        <authorList>
            <consortium name="US DOE Joint Genome Institute"/>
            <person name="Lucas S."/>
            <person name="Copeland A."/>
            <person name="Lapidus A."/>
            <person name="Glavina del Rio T."/>
            <person name="Dalin E."/>
            <person name="Tice H."/>
            <person name="Pitluck S."/>
            <person name="Chain P."/>
            <person name="Malfatti S."/>
            <person name="Shin M."/>
            <person name="Vergez L."/>
            <person name="Lang D."/>
            <person name="Schmutz J."/>
            <person name="Larimer F."/>
            <person name="Land M."/>
            <person name="Hauser L."/>
            <person name="Kyrpides N."/>
            <person name="Mikhailova N."/>
            <person name="Emerson D."/>
            <person name="Newman D.K."/>
            <person name="Roden E."/>
            <person name="Richardson P."/>
        </authorList>
    </citation>
    <scope>NUCLEOTIDE SEQUENCE [LARGE SCALE GENOMIC DNA]</scope>
    <source>
        <strain>TIE-1</strain>
    </source>
</reference>
<proteinExistence type="inferred from homology"/>
<name>RS7_RHOPT</name>